<sequence length="390" mass="42258">MVEADRPGKLFIGGLNTETNEKALEAVFGKYGRIVEVLLMKDRETNKSRGFAFVTFESPADAKDAARDMNGKSLDGKAIKVEQATKPSFESGRRGLPPPPRSRGPPRGLRGGRGGSGGTRGPPSRGGHMDDGGYSMNFTLSSSRGPLPVKRGPPPRSGGPPPKRSAPSGPVRSSSGMGGRAPVSRGRDGYGGPPRREPLPSRRDVYLSPRDDGYSTKDSYSSRDYPSSRDTRDYAPPPRDYTYRDYGHSSSRDDYPSRGYSDRDGYGRERDYSDHPSGGSYRDSYESYGNSRSAPPTRGPPPSYGGSSRYDDYSSSRDGYGGSRDSYTSSRSDLYSSGRDRVGRQERGLPPSMERGYPPPRDSYSSSSRGAPRGGGRGGSRSDRGGRSRY</sequence>
<evidence type="ECO:0000250" key="1"/>
<evidence type="ECO:0000250" key="2">
    <source>
        <dbReference type="UniProtKB" id="P38159"/>
    </source>
</evidence>
<evidence type="ECO:0000250" key="3">
    <source>
        <dbReference type="UniProtKB" id="Q9WV02"/>
    </source>
</evidence>
<evidence type="ECO:0000255" key="4">
    <source>
        <dbReference type="PROSITE-ProRule" id="PRU00176"/>
    </source>
</evidence>
<evidence type="ECO:0000256" key="5">
    <source>
        <dbReference type="SAM" id="MobiDB-lite"/>
    </source>
</evidence>
<evidence type="ECO:0000269" key="6">
    <source>
    </source>
</evidence>
<evidence type="ECO:0000269" key="7">
    <source>
    </source>
</evidence>
<evidence type="ECO:0000269" key="8">
    <source>
    </source>
</evidence>
<evidence type="ECO:0000305" key="9"/>
<dbReference type="EMBL" id="CH474106">
    <property type="protein sequence ID" value="EDL75123.1"/>
    <property type="molecule type" value="Genomic_DNA"/>
</dbReference>
<dbReference type="EMBL" id="BC097479">
    <property type="protein sequence ID" value="AAH97479.1"/>
    <property type="molecule type" value="mRNA"/>
</dbReference>
<dbReference type="RefSeq" id="NP_001020834.1">
    <property type="nucleotide sequence ID" value="NM_001025663.2"/>
</dbReference>
<dbReference type="RefSeq" id="XP_006257742.1">
    <property type="nucleotide sequence ID" value="XM_006257680.3"/>
</dbReference>
<dbReference type="RefSeq" id="XP_006257743.1">
    <property type="nucleotide sequence ID" value="XM_006257681.3"/>
</dbReference>
<dbReference type="RefSeq" id="XP_006257744.1">
    <property type="nucleotide sequence ID" value="XM_006257682.3"/>
</dbReference>
<dbReference type="RefSeq" id="XP_006257745.1">
    <property type="nucleotide sequence ID" value="XM_006257683.3"/>
</dbReference>
<dbReference type="SMR" id="Q4V898"/>
<dbReference type="BioGRID" id="257324">
    <property type="interactions" value="3"/>
</dbReference>
<dbReference type="CORUM" id="Q4V898"/>
<dbReference type="FunCoup" id="Q4V898">
    <property type="interactions" value="3297"/>
</dbReference>
<dbReference type="STRING" id="10116.ENSRNOP00000001154"/>
<dbReference type="GlyGen" id="Q4V898">
    <property type="glycosylation" value="1 site, 1 O-linked glycan (1 site)"/>
</dbReference>
<dbReference type="iPTMnet" id="Q4V898"/>
<dbReference type="PhosphoSitePlus" id="Q4V898"/>
<dbReference type="jPOST" id="Q4V898"/>
<dbReference type="PaxDb" id="10116-ENSRNOP00000001154"/>
<dbReference type="Ensembl" id="ENSRNOT00000097092.1">
    <property type="protein sequence ID" value="ENSRNOP00000089402.1"/>
    <property type="gene ID" value="ENSRNOG00000000866.8"/>
</dbReference>
<dbReference type="GeneID" id="302855"/>
<dbReference type="KEGG" id="rno:302855"/>
<dbReference type="AGR" id="RGD:1565256"/>
<dbReference type="CTD" id="27316"/>
<dbReference type="RGD" id="1565256">
    <property type="gene designation" value="Rbmx"/>
</dbReference>
<dbReference type="eggNOG" id="ENOG502QS9N">
    <property type="taxonomic scope" value="Eukaryota"/>
</dbReference>
<dbReference type="GeneTree" id="ENSGT00940000153425"/>
<dbReference type="HOGENOM" id="CLU_042286_0_0_1"/>
<dbReference type="InParanoid" id="Q4V898"/>
<dbReference type="PhylomeDB" id="Q4V898"/>
<dbReference type="TreeFam" id="TF331833"/>
<dbReference type="Reactome" id="R-RNO-72163">
    <property type="pathway name" value="mRNA Splicing - Major Pathway"/>
</dbReference>
<dbReference type="Reactome" id="R-RNO-72203">
    <property type="pathway name" value="Processing of Capped Intron-Containing Pre-mRNA"/>
</dbReference>
<dbReference type="Reactome" id="R-RNO-9013418">
    <property type="pathway name" value="RHOBTB2 GTPase cycle"/>
</dbReference>
<dbReference type="Reactome" id="R-RNO-9013422">
    <property type="pathway name" value="RHOBTB1 GTPase cycle"/>
</dbReference>
<dbReference type="Reactome" id="R-RNO-9696264">
    <property type="pathway name" value="RND3 GTPase cycle"/>
</dbReference>
<dbReference type="Reactome" id="R-RNO-9696270">
    <property type="pathway name" value="RND2 GTPase cycle"/>
</dbReference>
<dbReference type="Reactome" id="R-RNO-9696273">
    <property type="pathway name" value="RND1 GTPase cycle"/>
</dbReference>
<dbReference type="PRO" id="PR:Q4V898"/>
<dbReference type="Proteomes" id="UP000002494">
    <property type="component" value="Chromosome X"/>
</dbReference>
<dbReference type="Proteomes" id="UP000234681">
    <property type="component" value="Chromosome x"/>
</dbReference>
<dbReference type="Bgee" id="ENSRNOG00000000866">
    <property type="expression patterns" value="Expressed in thymus and 20 other cell types or tissues"/>
</dbReference>
<dbReference type="GO" id="GO:0071013">
    <property type="term" value="C:catalytic step 2 spliceosome"/>
    <property type="evidence" value="ECO:0000266"/>
    <property type="project" value="RGD"/>
</dbReference>
<dbReference type="GO" id="GO:0000791">
    <property type="term" value="C:euchromatin"/>
    <property type="evidence" value="ECO:0000266"/>
    <property type="project" value="RGD"/>
</dbReference>
<dbReference type="GO" id="GO:0070062">
    <property type="term" value="C:extracellular exosome"/>
    <property type="evidence" value="ECO:0000266"/>
    <property type="project" value="RGD"/>
</dbReference>
<dbReference type="GO" id="GO:0098978">
    <property type="term" value="C:glutamatergic synapse"/>
    <property type="evidence" value="ECO:0000314"/>
    <property type="project" value="SynGO"/>
</dbReference>
<dbReference type="GO" id="GO:0005634">
    <property type="term" value="C:nucleus"/>
    <property type="evidence" value="ECO:0000266"/>
    <property type="project" value="RGD"/>
</dbReference>
<dbReference type="GO" id="GO:0014069">
    <property type="term" value="C:postsynaptic density"/>
    <property type="evidence" value="ECO:0000314"/>
    <property type="project" value="SynGO"/>
</dbReference>
<dbReference type="GO" id="GO:0032991">
    <property type="term" value="C:protein-containing complex"/>
    <property type="evidence" value="ECO:0000266"/>
    <property type="project" value="RGD"/>
</dbReference>
<dbReference type="GO" id="GO:0005681">
    <property type="term" value="C:spliceosomal complex"/>
    <property type="evidence" value="ECO:0000318"/>
    <property type="project" value="GO_Central"/>
</dbReference>
<dbReference type="GO" id="GO:0044530">
    <property type="term" value="C:supraspliceosomal complex"/>
    <property type="evidence" value="ECO:0000266"/>
    <property type="project" value="RGD"/>
</dbReference>
<dbReference type="GO" id="GO:0003682">
    <property type="term" value="F:chromatin binding"/>
    <property type="evidence" value="ECO:0000266"/>
    <property type="project" value="RGD"/>
</dbReference>
<dbReference type="GO" id="GO:0042802">
    <property type="term" value="F:identical protein binding"/>
    <property type="evidence" value="ECO:0000266"/>
    <property type="project" value="RGD"/>
</dbReference>
<dbReference type="GO" id="GO:0003729">
    <property type="term" value="F:mRNA binding"/>
    <property type="evidence" value="ECO:0000266"/>
    <property type="project" value="RGD"/>
</dbReference>
<dbReference type="GO" id="GO:0019904">
    <property type="term" value="F:protein domain specific binding"/>
    <property type="evidence" value="ECO:0000266"/>
    <property type="project" value="RGD"/>
</dbReference>
<dbReference type="GO" id="GO:0003723">
    <property type="term" value="F:RNA binding"/>
    <property type="evidence" value="ECO:0000266"/>
    <property type="project" value="RGD"/>
</dbReference>
<dbReference type="GO" id="GO:0000978">
    <property type="term" value="F:RNA polymerase II cis-regulatory region sequence-specific DNA binding"/>
    <property type="evidence" value="ECO:0000266"/>
    <property type="project" value="RGD"/>
</dbReference>
<dbReference type="GO" id="GO:0003727">
    <property type="term" value="F:single-stranded RNA binding"/>
    <property type="evidence" value="ECO:0000314"/>
    <property type="project" value="RGD"/>
</dbReference>
<dbReference type="GO" id="GO:0071347">
    <property type="term" value="P:cellular response to interleukin-1"/>
    <property type="evidence" value="ECO:0000266"/>
    <property type="project" value="RGD"/>
</dbReference>
<dbReference type="GO" id="GO:0006509">
    <property type="term" value="P:membrane protein ectodomain proteolysis"/>
    <property type="evidence" value="ECO:0000266"/>
    <property type="project" value="RGD"/>
</dbReference>
<dbReference type="GO" id="GO:0006376">
    <property type="term" value="P:mRNA splice site recognition"/>
    <property type="evidence" value="ECO:0000315"/>
    <property type="project" value="RGD"/>
</dbReference>
<dbReference type="GO" id="GO:0045893">
    <property type="term" value="P:positive regulation of DNA-templated transcription"/>
    <property type="evidence" value="ECO:0000315"/>
    <property type="project" value="RGD"/>
</dbReference>
<dbReference type="GO" id="GO:0048026">
    <property type="term" value="P:positive regulation of mRNA splicing, via spliceosome"/>
    <property type="evidence" value="ECO:0000318"/>
    <property type="project" value="GO_Central"/>
</dbReference>
<dbReference type="GO" id="GO:0045944">
    <property type="term" value="P:positive regulation of transcription by RNA polymerase II"/>
    <property type="evidence" value="ECO:0000266"/>
    <property type="project" value="RGD"/>
</dbReference>
<dbReference type="GO" id="GO:0000381">
    <property type="term" value="P:regulation of alternative mRNA splicing, via spliceosome"/>
    <property type="evidence" value="ECO:0000266"/>
    <property type="project" value="RGD"/>
</dbReference>
<dbReference type="GO" id="GO:0099175">
    <property type="term" value="P:regulation of postsynapse organization"/>
    <property type="evidence" value="ECO:0000314"/>
    <property type="project" value="SynGO"/>
</dbReference>
<dbReference type="GO" id="GO:0006366">
    <property type="term" value="P:transcription by RNA polymerase II"/>
    <property type="evidence" value="ECO:0000266"/>
    <property type="project" value="RGD"/>
</dbReference>
<dbReference type="CDD" id="cd12382">
    <property type="entry name" value="RRM_RBMX_like"/>
    <property type="match status" value="1"/>
</dbReference>
<dbReference type="FunFam" id="3.30.70.330:FF:000119">
    <property type="entry name" value="RNA-binding motif protein, X chromosome"/>
    <property type="match status" value="1"/>
</dbReference>
<dbReference type="Gene3D" id="3.30.70.330">
    <property type="match status" value="1"/>
</dbReference>
<dbReference type="InterPro" id="IPR012677">
    <property type="entry name" value="Nucleotide-bd_a/b_plait_sf"/>
</dbReference>
<dbReference type="InterPro" id="IPR035979">
    <property type="entry name" value="RBD_domain_sf"/>
</dbReference>
<dbReference type="InterPro" id="IPR050441">
    <property type="entry name" value="RBM"/>
</dbReference>
<dbReference type="InterPro" id="IPR012604">
    <property type="entry name" value="RBM1CTR"/>
</dbReference>
<dbReference type="InterPro" id="IPR000504">
    <property type="entry name" value="RRM_dom"/>
</dbReference>
<dbReference type="InterPro" id="IPR003954">
    <property type="entry name" value="RRM_dom_euk"/>
</dbReference>
<dbReference type="PANTHER" id="PTHR48034">
    <property type="entry name" value="TRANSFORMER-2 SEX-DETERMINING PROTEIN-RELATED"/>
    <property type="match status" value="1"/>
</dbReference>
<dbReference type="Pfam" id="PF08081">
    <property type="entry name" value="RBM1CTR"/>
    <property type="match status" value="1"/>
</dbReference>
<dbReference type="Pfam" id="PF00076">
    <property type="entry name" value="RRM_1"/>
    <property type="match status" value="1"/>
</dbReference>
<dbReference type="SMART" id="SM00360">
    <property type="entry name" value="RRM"/>
    <property type="match status" value="1"/>
</dbReference>
<dbReference type="SMART" id="SM00361">
    <property type="entry name" value="RRM_1"/>
    <property type="match status" value="1"/>
</dbReference>
<dbReference type="SUPFAM" id="SSF54928">
    <property type="entry name" value="RNA-binding domain, RBD"/>
    <property type="match status" value="1"/>
</dbReference>
<dbReference type="PROSITE" id="PS50102">
    <property type="entry name" value="RRM"/>
    <property type="match status" value="1"/>
</dbReference>
<proteinExistence type="evidence at protein level"/>
<feature type="chain" id="PRO_0000413089" description="RNA-binding motif protein, X chromosome">
    <location>
        <begin position="1"/>
        <end position="390"/>
    </location>
</feature>
<feature type="initiator methionine" description="Removed; alternate" evidence="2">
    <location>
        <position position="1"/>
    </location>
</feature>
<feature type="chain" id="PRO_0000413017" description="RNA-binding motif protein, X chromosome, N-terminally processed">
    <location>
        <begin position="2"/>
        <end position="390"/>
    </location>
</feature>
<feature type="domain" description="RRM" evidence="4">
    <location>
        <begin position="8"/>
        <end position="86"/>
    </location>
</feature>
<feature type="region of interest" description="Disordered" evidence="5">
    <location>
        <begin position="58"/>
        <end position="390"/>
    </location>
</feature>
<feature type="compositionally biased region" description="Basic and acidic residues" evidence="5">
    <location>
        <begin position="60"/>
        <end position="80"/>
    </location>
</feature>
<feature type="compositionally biased region" description="Gly residues" evidence="5">
    <location>
        <begin position="109"/>
        <end position="120"/>
    </location>
</feature>
<feature type="compositionally biased region" description="Pro residues" evidence="5">
    <location>
        <begin position="151"/>
        <end position="164"/>
    </location>
</feature>
<feature type="compositionally biased region" description="Basic and acidic residues" evidence="5">
    <location>
        <begin position="194"/>
        <end position="215"/>
    </location>
</feature>
<feature type="compositionally biased region" description="Basic and acidic residues" evidence="5">
    <location>
        <begin position="241"/>
        <end position="274"/>
    </location>
</feature>
<feature type="compositionally biased region" description="Low complexity" evidence="5">
    <location>
        <begin position="323"/>
        <end position="337"/>
    </location>
</feature>
<feature type="compositionally biased region" description="Basic and acidic residues" evidence="5">
    <location>
        <begin position="338"/>
        <end position="347"/>
    </location>
</feature>
<feature type="compositionally biased region" description="Low complexity" evidence="5">
    <location>
        <begin position="362"/>
        <end position="371"/>
    </location>
</feature>
<feature type="compositionally biased region" description="Basic and acidic residues" evidence="5">
    <location>
        <begin position="380"/>
        <end position="390"/>
    </location>
</feature>
<feature type="modified residue" description="N-acetylmethionine; in Heterogeneous nuclear ribonucleoprotein G; alternate" evidence="2">
    <location>
        <position position="1"/>
    </location>
</feature>
<feature type="modified residue" description="N-acetylvaline; in Heterogeneous nuclear ribonucleoprotein G, N-terminally processed" evidence="2">
    <location>
        <position position="2"/>
    </location>
</feature>
<feature type="modified residue" description="N6-acetyllysine" evidence="2">
    <location>
        <position position="30"/>
    </location>
</feature>
<feature type="modified residue" description="Phosphoserine" evidence="2">
    <location>
        <position position="88"/>
    </location>
</feature>
<feature type="modified residue" description="Phosphoserine" evidence="2">
    <location>
        <position position="91"/>
    </location>
</feature>
<feature type="modified residue" description="Omega-N-methylarginine" evidence="3">
    <location>
        <position position="125"/>
    </location>
</feature>
<feature type="modified residue" description="Omega-N-methylarginine" evidence="3">
    <location>
        <position position="144"/>
    </location>
</feature>
<feature type="modified residue" description="Omega-N-methylarginine" evidence="3">
    <location>
        <position position="164"/>
    </location>
</feature>
<feature type="modified residue" description="Phosphoserine" evidence="2">
    <location>
        <position position="165"/>
    </location>
</feature>
<feature type="modified residue" description="Omega-N-methylarginine" evidence="3">
    <location>
        <position position="172"/>
    </location>
</feature>
<feature type="modified residue" description="Phosphoserine" evidence="2">
    <location>
        <position position="174"/>
    </location>
</feature>
<feature type="modified residue" description="Phosphoserine" evidence="2">
    <location>
        <position position="261"/>
    </location>
</feature>
<feature type="modified residue" description="Phosphoserine" evidence="2">
    <location>
        <position position="329"/>
    </location>
</feature>
<feature type="modified residue" description="Phosphoserine" evidence="2">
    <location>
        <position position="330"/>
    </location>
</feature>
<feature type="modified residue" description="Phosphoserine" evidence="2">
    <location>
        <position position="332"/>
    </location>
</feature>
<feature type="modified residue" description="Phosphoserine" evidence="2">
    <location>
        <position position="352"/>
    </location>
</feature>
<feature type="cross-link" description="Glycyl lysine isopeptide (Lys-Gly) (interchain with G-Cter in SUMO2)" evidence="2">
    <location>
        <position position="22"/>
    </location>
</feature>
<feature type="cross-link" description="Glycyl lysine isopeptide (Lys-Gly) (interchain with G-Cter in SUMO2)" evidence="2">
    <location>
        <position position="80"/>
    </location>
</feature>
<feature type="cross-link" description="Glycyl lysine isopeptide (Lys-Gly) (interchain with G-Cter in SUMO2)" evidence="2">
    <location>
        <position position="86"/>
    </location>
</feature>
<feature type="sequence conflict" description="In Ref. 3; AA sequence." evidence="9" ref="3">
    <original>I</original>
    <variation>K</variation>
    <location>
        <position position="12"/>
    </location>
</feature>
<feature type="sequence conflict" description="In Ref. 3; AA sequence." evidence="9" ref="3">
    <original>G</original>
    <variation>D</variation>
    <location>
        <position position="348"/>
    </location>
</feature>
<reference key="1">
    <citation type="submission" date="2005-09" db="EMBL/GenBank/DDBJ databases">
        <authorList>
            <person name="Mural R.J."/>
            <person name="Adams M.D."/>
            <person name="Myers E.W."/>
            <person name="Smith H.O."/>
            <person name="Venter J.C."/>
        </authorList>
    </citation>
    <scope>NUCLEOTIDE SEQUENCE [LARGE SCALE GENOMIC DNA]</scope>
</reference>
<reference key="2">
    <citation type="journal article" date="2004" name="Genome Res.">
        <title>The status, quality, and expansion of the NIH full-length cDNA project: the Mammalian Gene Collection (MGC).</title>
        <authorList>
            <consortium name="The MGC Project Team"/>
        </authorList>
    </citation>
    <scope>NUCLEOTIDE SEQUENCE [LARGE SCALE MRNA]</scope>
    <source>
        <tissue>Placenta</tissue>
    </source>
</reference>
<reference key="3">
    <citation type="journal article" date="2005" name="FEBS J.">
        <title>Proteome analysis of a rat liver nuclear insoluble protein fraction and localization of a novel protein, ISP36, to compartments in the interchromatin space.</title>
        <authorList>
            <person name="Segawa M."/>
            <person name="Niino K."/>
            <person name="Mineki R."/>
            <person name="Kaga N."/>
            <person name="Murayama K."/>
            <person name="Sugimoto K."/>
            <person name="Watanabe Y."/>
            <person name="Furukawa K."/>
            <person name="Horigome T."/>
        </authorList>
    </citation>
    <scope>PROTEIN SEQUENCE OF 10-17 AND 348-355</scope>
    <source>
        <tissue>Liver</tissue>
    </source>
</reference>
<reference key="4">
    <citation type="journal article" date="2004" name="J. Neurochem.">
        <title>Tau exon 10, whose missplicing causes frontotemporal dementia, is regulated by an intricate interplay of cis elements and trans factors.</title>
        <authorList>
            <person name="Wang J."/>
            <person name="Gao Q.S."/>
            <person name="Wang Y."/>
            <person name="Lafyatis R."/>
            <person name="Stamm S."/>
            <person name="Andreadis A."/>
        </authorList>
    </citation>
    <scope>FUNCTION</scope>
</reference>
<reference key="5">
    <citation type="journal article" date="2007" name="FEBS Lett.">
        <title>RBMX is a novel hepatic transcriptional regulator of SREBP-1c gene response to high-fructose diet.</title>
        <authorList>
            <person name="Takemoto T."/>
            <person name="Nishio Y."/>
            <person name="Sekine O."/>
            <person name="Ikeuchi C."/>
            <person name="Nagai Y."/>
            <person name="Maeno Y."/>
            <person name="Maegawa H."/>
            <person name="Kimura H."/>
            <person name="Kashiwagi A."/>
        </authorList>
    </citation>
    <scope>FUNCTION</scope>
    <scope>SREBF1 TRANSACTIVATION</scope>
</reference>
<reference key="6">
    <citation type="journal article" date="2009" name="J. Biol. Chem.">
        <title>Heterogeneous nuclear ribonucleoprotein G regulates splice site selection by binding to CC(A/C)-rich regions in pre-mRNA.</title>
        <authorList>
            <person name="Heinrich B."/>
            <person name="Zhang Z."/>
            <person name="Raitskin O."/>
            <person name="Hiller M."/>
            <person name="Benderska N."/>
            <person name="Hartmann A.M."/>
            <person name="Bracco L."/>
            <person name="Elliott D."/>
            <person name="Ben-Ari S."/>
            <person name="Soreq H."/>
            <person name="Sperling J."/>
            <person name="Sperling R."/>
            <person name="Stamm S."/>
        </authorList>
    </citation>
    <scope>FUNCTION</scope>
    <scope>IDENTIFICATION IN THE SUPRASPLICEOSOME COMPLEX</scope>
    <scope>HOMOMULTIMERIZATION</scope>
    <scope>INTERACTION WITH CLK2; KHDRBS2; SAFB; TRA2B AND YTHDC1</scope>
    <scope>RNA-BINDING</scope>
    <scope>TISSUE SPECIFICITY</scope>
</reference>
<organism>
    <name type="scientific">Rattus norvegicus</name>
    <name type="common">Rat</name>
    <dbReference type="NCBI Taxonomy" id="10116"/>
    <lineage>
        <taxon>Eukaryota</taxon>
        <taxon>Metazoa</taxon>
        <taxon>Chordata</taxon>
        <taxon>Craniata</taxon>
        <taxon>Vertebrata</taxon>
        <taxon>Euteleostomi</taxon>
        <taxon>Mammalia</taxon>
        <taxon>Eutheria</taxon>
        <taxon>Euarchontoglires</taxon>
        <taxon>Glires</taxon>
        <taxon>Rodentia</taxon>
        <taxon>Myomorpha</taxon>
        <taxon>Muroidea</taxon>
        <taxon>Muridae</taxon>
        <taxon>Murinae</taxon>
        <taxon>Rattus</taxon>
    </lineage>
</organism>
<protein>
    <recommendedName>
        <fullName>RNA-binding motif protein, X chromosome</fullName>
    </recommendedName>
    <alternativeName>
        <fullName>Heterogeneous nuclear ribonucleoprotein G</fullName>
        <shortName>hnRNP G</shortName>
    </alternativeName>
    <alternativeName>
        <fullName>RNA-binding motif protein, X chromosome retrogene</fullName>
    </alternativeName>
    <alternativeName>
        <fullName>RNA-binding motif protein, X chromosome retrogene-like</fullName>
    </alternativeName>
    <component>
        <recommendedName>
            <fullName>RNA-binding motif protein, X chromosome, N-terminally processed</fullName>
        </recommendedName>
    </component>
</protein>
<comment type="function">
    <text evidence="6 7 8">RNA-binding protein that plays several role in the regulation of pre- and post-transcriptional processes. Implicated in tissue-specific regulation of gene transcription and alternative splicing of several pre-mRNAs. Binds to and stimulates transcription from the tumor suppressor TXNIP gene promoter; may thus be involved in tumor suppression. When associated with SAFB, binds to and stimulates transcription from the SREBF1 promoter. Associates with nascent mRNAs transcribed by RNA polymerase II. Component of the supraspliceosome complex that regulates pre-mRNA alternative splice site selection. Can either activate or suppress exon inclusion; acts additively with TRA2B to promote exon 7 inclusion of the survival motor neuron SMN. Represses the splicing of MAPT/Tau exon 10. Binds preferentially to single-stranded 5'-CC[A/C]-rich RNA sequence motifs localized in a single-stranded conformation; probably binds RNA as a homodimer. Binds non-specifically to pre-mRNAs. Also plays a role in the cytoplasmic TNFR1 trafficking pathways; promotes both the IL-1-beta-mediated inducible proteolytic cleavage of TNFR1 ectodomains and the release of TNFR1 exosome-like vesicles to the extracellular compartment.</text>
</comment>
<comment type="subunit">
    <text evidence="2 3 8">Homomultimer (By similarity). Found in the supraspliceosome complex (PubMed:19282290) Identified in the spliceosome C complex (By similarity). Interacts with KHDRBS3 (By similarity). Forms a complex with ILF2, ILF3, YLPM1, KHDRBS1, NCOA5 and PPP1CA (By similarity). Interacts with SAFB/SAFB1 (By similarity). Interacts with ERAP1; the interaction is RNA-independent (By similarity). Interacts with CLK2, KHDRBS2, SAFB, TRA2B and YTHDC1 (PubMed:19282290). Interacts with PPIA/CYPA (By similarity).</text>
</comment>
<comment type="subcellular location">
    <subcellularLocation>
        <location evidence="1">Nucleus</location>
    </subcellularLocation>
    <text evidence="1">Component of ribonucleosomes (By similarity). Localizes in numerous small granules in the nucleus.</text>
</comment>
<comment type="tissue specificity">
    <text evidence="8">Expressed in brain, spleen, lung, liver, kidney, testis and heart. Weakly expressed in skeletal muscle (at protein level).</text>
</comment>
<comment type="domain">
    <text>The RRM domain is necessary for RNA-binding, but not for splice site selection, indicating that its splicing activity does not require direct binding to RNA.</text>
</comment>
<comment type="PTM">
    <text evidence="1">O-glycosylated.</text>
</comment>
<comment type="PTM">
    <text evidence="1">Arg-182 is dimethylated, probably to asymmetric dimethylarginine.</text>
</comment>
<name>RBMX_RAT</name>
<gene>
    <name type="primary">Rbmx</name>
    <name type="synonym">Rbmxrt</name>
</gene>
<accession>Q4V898</accession>
<keyword id="KW-0007">Acetylation</keyword>
<keyword id="KW-0903">Direct protein sequencing</keyword>
<keyword id="KW-0325">Glycoprotein</keyword>
<keyword id="KW-1017">Isopeptide bond</keyword>
<keyword id="KW-0488">Methylation</keyword>
<keyword id="KW-0507">mRNA processing</keyword>
<keyword id="KW-0508">mRNA splicing</keyword>
<keyword id="KW-0539">Nucleus</keyword>
<keyword id="KW-0597">Phosphoprotein</keyword>
<keyword id="KW-1185">Reference proteome</keyword>
<keyword id="KW-0678">Repressor</keyword>
<keyword id="KW-0687">Ribonucleoprotein</keyword>
<keyword id="KW-0694">RNA-binding</keyword>
<keyword id="KW-0747">Spliceosome</keyword>
<keyword id="KW-0804">Transcription</keyword>
<keyword id="KW-0043">Tumor suppressor</keyword>
<keyword id="KW-0832">Ubl conjugation</keyword>